<protein>
    <recommendedName>
        <fullName>Invertase 2</fullName>
        <ecNumber>3.2.1.26</ecNumber>
    </recommendedName>
    <alternativeName>
        <fullName>Beta-fructofuranosidase 2</fullName>
    </alternativeName>
    <alternativeName>
        <fullName>Saccharase</fullName>
    </alternativeName>
</protein>
<sequence>MLLQAFLFLLAGFAAKISASMTNETSDRPLVHFTPNKGWMNDPNGLWYDEKDAKWHLYFQYNPNDTVWGTPLFWGHATSDDLTNWEDQPIAIAPKRNDSGAFSGSMVVDYNNTSGFFNDTIDPRQRCVAIWTYNTPESEEQYISYSLDGGYTFTEYQKNPVLAANSTQFRDPKVFWYEPSQKWIMTAAKSQDYKIEIYSSDDLKSWKLESAFANEGFLGYQYECPGLIEVPTEQDPSKSYWVMFISINPGAPAGGSFNQYFVGSFNGTHFEAFDNQSRVVDFGKDYYALQTFFNTDPTYGSALGIAWASNWEYSAFVPTNPWRSSMSLVRKFSLNTEYQANPETELINLKAEPILNISNAGPWSRFATNTTLTKANSYNVDLSNSTGTLEFELVYAVNTTQTISKSVFADLSLWFKGLEDPEEYLRMGFEVSASSFFLDRGNSKVKFVKENPYFTNRMSVNNQPFKSENDLSYYKVYGLLDQNILELYFNDGDVVSTNTYFMTTGNALGSVNMTTGVDNLFYIDKFQVREVK</sequence>
<comment type="catalytic activity">
    <reaction evidence="2">
        <text>Hydrolysis of terminal non-reducing beta-D-fructofuranoside residues in beta-D-fructofuranosides.</text>
        <dbReference type="EC" id="3.2.1.26"/>
    </reaction>
</comment>
<comment type="subcellular location">
    <molecule>Isoform Intracellular</molecule>
    <subcellularLocation>
        <location>Cytoplasm</location>
    </subcellularLocation>
</comment>
<comment type="subcellular location">
    <molecule>Isoform Secreted</molecule>
    <subcellularLocation>
        <location>Secreted</location>
    </subcellularLocation>
</comment>
<comment type="alternative products">
    <event type="alternative initiation"/>
    <isoform>
        <id>P00724-1</id>
        <name>Secreted</name>
        <sequence type="displayed"/>
    </isoform>
    <isoform>
        <id>P00724-2</id>
        <name>Intracellular</name>
        <sequence type="described" ref="VSP_019611"/>
    </isoform>
</comment>
<comment type="PTM">
    <text evidence="5">Isoform Secreted is glycosylated. Isoform Intracellular is not glycosylated.</text>
</comment>
<comment type="miscellaneous">
    <text evidence="3">Present with 1780 molecules/cell in log phase SD medium.</text>
</comment>
<comment type="miscellaneous">
    <molecule>Isoform Intracellular</molecule>
    <text evidence="6">Produced by alternative initiation at Met-21 of isoform Secreted.</text>
</comment>
<comment type="similarity">
    <text evidence="6">Belongs to the glycosyl hydrolase 32 family.</text>
</comment>
<feature type="signal peptide" evidence="4">
    <location>
        <begin position="1"/>
        <end position="19"/>
    </location>
</feature>
<feature type="chain" id="PRO_0000033399" description="Invertase 2">
    <location>
        <begin position="20"/>
        <end position="532"/>
    </location>
</feature>
<feature type="active site" evidence="2 4">
    <location>
        <position position="42"/>
    </location>
</feature>
<feature type="binding site" evidence="1">
    <location>
        <begin position="39"/>
        <end position="42"/>
    </location>
    <ligand>
        <name>substrate</name>
    </ligand>
</feature>
<feature type="binding site" evidence="1">
    <location>
        <position position="60"/>
    </location>
    <ligand>
        <name>substrate</name>
    </ligand>
</feature>
<feature type="binding site" evidence="1">
    <location>
        <begin position="102"/>
        <end position="103"/>
    </location>
    <ligand>
        <name>substrate</name>
    </ligand>
</feature>
<feature type="binding site" evidence="1">
    <location>
        <begin position="170"/>
        <end position="171"/>
    </location>
    <ligand>
        <name>substrate</name>
    </ligand>
</feature>
<feature type="binding site" evidence="1">
    <location>
        <position position="223"/>
    </location>
    <ligand>
        <name>substrate</name>
    </ligand>
</feature>
<feature type="binding site" evidence="1">
    <location>
        <position position="311"/>
    </location>
    <ligand>
        <name>substrate</name>
    </ligand>
</feature>
<feature type="glycosylation site" description="N-linked (GlcNAc...) asparagine" evidence="5">
    <location>
        <position position="23"/>
    </location>
</feature>
<feature type="glycosylation site" description="N-linked (GlcNAc...) asparagine; partial" evidence="5">
    <location>
        <position position="64"/>
    </location>
</feature>
<feature type="glycosylation site" description="N-linked (GlcNAc...) asparagine" evidence="5">
    <location>
        <position position="97"/>
    </location>
</feature>
<feature type="glycosylation site" description="N-linked (GlcNAc...) asparagine" evidence="5">
    <location>
        <position position="111"/>
    </location>
</feature>
<feature type="glycosylation site" description="N-linked (GlcNAc...) asparagine" evidence="5">
    <location>
        <position position="118"/>
    </location>
</feature>
<feature type="glycosylation site" description="N-linked (GlcNAc...) asparagine; partial" evidence="5">
    <location>
        <position position="165"/>
    </location>
</feature>
<feature type="glycosylation site" description="N-linked (GlcNAc...) asparagine; partial" evidence="5">
    <location>
        <position position="266"/>
    </location>
</feature>
<feature type="glycosylation site" description="N-linked (GlcNAc...) asparagine; partial" evidence="5">
    <location>
        <position position="275"/>
    </location>
</feature>
<feature type="glycosylation site" description="N-linked (GlcNAc...) asparagine" evidence="5">
    <location>
        <position position="356"/>
    </location>
</feature>
<feature type="glycosylation site" description="N-linked (GlcNAc...) asparagine" evidence="5">
    <location>
        <position position="369"/>
    </location>
</feature>
<feature type="glycosylation site" description="N-linked (GlcNAc...) asparagine" evidence="5">
    <location>
        <position position="384"/>
    </location>
</feature>
<feature type="glycosylation site" description="N-linked (GlcNAc...) asparagine" evidence="5">
    <location>
        <position position="398"/>
    </location>
</feature>
<feature type="glycosylation site" description="N-linked (GlcNAc...) asparagine; partial" evidence="5">
    <location>
        <position position="512"/>
    </location>
</feature>
<feature type="splice variant" id="VSP_019611" description="In isoform Intracellular." evidence="6">
    <location>
        <begin position="1"/>
        <end position="20"/>
    </location>
</feature>
<feature type="mutagenesis site" description="Loss of activity." evidence="4">
    <original>D</original>
    <variation>N</variation>
    <location>
        <position position="42"/>
    </location>
</feature>
<feature type="sequence conflict" description="In Ref. 4; AAA73474." evidence="6" ref="4">
    <original>K</original>
    <variation>P</variation>
    <location>
        <position position="51"/>
    </location>
</feature>
<feature type="sequence conflict" description="In Ref. 9; AA sequence." evidence="6" ref="9">
    <original>A</original>
    <variation>P</variation>
    <location>
        <position position="409"/>
    </location>
</feature>
<feature type="strand" evidence="7">
    <location>
        <begin position="30"/>
        <end position="32"/>
    </location>
</feature>
<feature type="strand" evidence="7">
    <location>
        <begin position="36"/>
        <end position="49"/>
    </location>
</feature>
<feature type="turn" evidence="7">
    <location>
        <begin position="50"/>
        <end position="53"/>
    </location>
</feature>
<feature type="strand" evidence="7">
    <location>
        <begin position="54"/>
        <end position="67"/>
    </location>
</feature>
<feature type="strand" evidence="7">
    <location>
        <begin position="73"/>
        <end position="84"/>
    </location>
</feature>
<feature type="strand" evidence="7">
    <location>
        <begin position="86"/>
        <end position="92"/>
    </location>
</feature>
<feature type="strand" evidence="7">
    <location>
        <begin position="100"/>
        <end position="108"/>
    </location>
</feature>
<feature type="helix" evidence="7">
    <location>
        <begin position="123"/>
        <end position="125"/>
    </location>
</feature>
<feature type="strand" evidence="7">
    <location>
        <begin position="127"/>
        <end position="134"/>
    </location>
</feature>
<feature type="strand" evidence="7">
    <location>
        <begin position="139"/>
        <end position="145"/>
    </location>
</feature>
<feature type="strand" evidence="7">
    <location>
        <begin position="147"/>
        <end position="152"/>
    </location>
</feature>
<feature type="strand" evidence="7">
    <location>
        <begin position="170"/>
        <end position="177"/>
    </location>
</feature>
<feature type="turn" evidence="7">
    <location>
        <begin position="178"/>
        <end position="181"/>
    </location>
</feature>
<feature type="strand" evidence="7">
    <location>
        <begin position="182"/>
        <end position="189"/>
    </location>
</feature>
<feature type="helix" evidence="7">
    <location>
        <begin position="190"/>
        <end position="192"/>
    </location>
</feature>
<feature type="strand" evidence="7">
    <location>
        <begin position="194"/>
        <end position="205"/>
    </location>
</feature>
<feature type="strand" evidence="7">
    <location>
        <begin position="207"/>
        <end position="212"/>
    </location>
</feature>
<feature type="strand" evidence="7">
    <location>
        <begin position="223"/>
        <end position="234"/>
    </location>
</feature>
<feature type="strand" evidence="7">
    <location>
        <begin position="239"/>
        <end position="247"/>
    </location>
</feature>
<feature type="strand" evidence="7">
    <location>
        <begin position="257"/>
        <end position="265"/>
    </location>
</feature>
<feature type="strand" evidence="7">
    <location>
        <begin position="270"/>
        <end position="275"/>
    </location>
</feature>
<feature type="strand" evidence="7">
    <location>
        <begin position="278"/>
        <end position="280"/>
    </location>
</feature>
<feature type="strand" evidence="7">
    <location>
        <begin position="283"/>
        <end position="285"/>
    </location>
</feature>
<feature type="strand" evidence="7">
    <location>
        <begin position="287"/>
        <end position="291"/>
    </location>
</feature>
<feature type="turn" evidence="7">
    <location>
        <begin position="297"/>
        <end position="299"/>
    </location>
</feature>
<feature type="strand" evidence="7">
    <location>
        <begin position="303"/>
        <end position="309"/>
    </location>
</feature>
<feature type="turn" evidence="7">
    <location>
        <begin position="311"/>
        <end position="315"/>
    </location>
</feature>
<feature type="strand" evidence="7">
    <location>
        <begin position="316"/>
        <end position="318"/>
    </location>
</feature>
<feature type="strand" evidence="7">
    <location>
        <begin position="320"/>
        <end position="323"/>
    </location>
</feature>
<feature type="strand" evidence="7">
    <location>
        <begin position="329"/>
        <end position="343"/>
    </location>
</feature>
<feature type="strand" evidence="7">
    <location>
        <begin position="345"/>
        <end position="354"/>
    </location>
</feature>
<feature type="strand" evidence="7">
    <location>
        <begin position="374"/>
        <end position="382"/>
    </location>
</feature>
<feature type="strand" evidence="7">
    <location>
        <begin position="387"/>
        <end position="397"/>
    </location>
</feature>
<feature type="strand" evidence="7">
    <location>
        <begin position="410"/>
        <end position="416"/>
    </location>
</feature>
<feature type="strand" evidence="7">
    <location>
        <begin position="418"/>
        <end position="423"/>
    </location>
</feature>
<feature type="strand" evidence="7">
    <location>
        <begin position="425"/>
        <end position="430"/>
    </location>
</feature>
<feature type="turn" evidence="7">
    <location>
        <begin position="431"/>
        <end position="434"/>
    </location>
</feature>
<feature type="strand" evidence="7">
    <location>
        <begin position="435"/>
        <end position="439"/>
    </location>
</feature>
<feature type="helix" evidence="7">
    <location>
        <begin position="446"/>
        <end position="450"/>
    </location>
</feature>
<feature type="strand" evidence="7">
    <location>
        <begin position="465"/>
        <end position="468"/>
    </location>
</feature>
<feature type="strand" evidence="7">
    <location>
        <begin position="471"/>
        <end position="489"/>
    </location>
</feature>
<feature type="turn" evidence="7">
    <location>
        <begin position="490"/>
        <end position="493"/>
    </location>
</feature>
<feature type="strand" evidence="7">
    <location>
        <begin position="494"/>
        <end position="499"/>
    </location>
</feature>
<feature type="strand" evidence="7">
    <location>
        <begin position="503"/>
        <end position="505"/>
    </location>
</feature>
<feature type="strand" evidence="7">
    <location>
        <begin position="510"/>
        <end position="517"/>
    </location>
</feature>
<feature type="strand" evidence="7">
    <location>
        <begin position="521"/>
        <end position="530"/>
    </location>
</feature>
<organism>
    <name type="scientific">Saccharomyces cerevisiae (strain ATCC 204508 / S288c)</name>
    <name type="common">Baker's yeast</name>
    <dbReference type="NCBI Taxonomy" id="559292"/>
    <lineage>
        <taxon>Eukaryota</taxon>
        <taxon>Fungi</taxon>
        <taxon>Dikarya</taxon>
        <taxon>Ascomycota</taxon>
        <taxon>Saccharomycotina</taxon>
        <taxon>Saccharomycetes</taxon>
        <taxon>Saccharomycetales</taxon>
        <taxon>Saccharomycetaceae</taxon>
        <taxon>Saccharomyces</taxon>
    </lineage>
</organism>
<keyword id="KW-0002">3D-structure</keyword>
<keyword id="KW-0024">Alternative initiation</keyword>
<keyword id="KW-0963">Cytoplasm</keyword>
<keyword id="KW-0903">Direct protein sequencing</keyword>
<keyword id="KW-0325">Glycoprotein</keyword>
<keyword id="KW-0326">Glycosidase</keyword>
<keyword id="KW-0378">Hydrolase</keyword>
<keyword id="KW-1185">Reference proteome</keyword>
<keyword id="KW-0964">Secreted</keyword>
<keyword id="KW-0732">Signal</keyword>
<proteinExistence type="evidence at protein level"/>
<dbReference type="EC" id="3.2.1.26"/>
<dbReference type="EMBL" id="Z46921">
    <property type="protein sequence ID" value="CAA87030.1"/>
    <property type="molecule type" value="Genomic_DNA"/>
</dbReference>
<dbReference type="EMBL" id="U19781">
    <property type="protein sequence ID" value="AAA73474.1"/>
    <property type="molecule type" value="Genomic_DNA"/>
</dbReference>
<dbReference type="EMBL" id="V01311">
    <property type="protein sequence ID" value="CAA24618.1"/>
    <property type="molecule type" value="Genomic_DNA"/>
</dbReference>
<dbReference type="EMBL" id="K03294">
    <property type="protein sequence ID" value="AAA35127.1"/>
    <property type="molecule type" value="Genomic_DNA"/>
</dbReference>
<dbReference type="EMBL" id="M13627">
    <property type="protein sequence ID" value="AAA35129.1"/>
    <property type="molecule type" value="Genomic_DNA"/>
</dbReference>
<dbReference type="EMBL" id="BK006942">
    <property type="protein sequence ID" value="DAA08390.1"/>
    <property type="molecule type" value="Genomic_DNA"/>
</dbReference>
<dbReference type="PIR" id="A00899">
    <property type="entry name" value="IFBY"/>
</dbReference>
<dbReference type="RefSeq" id="NP_012104.1">
    <molecule id="P00724-1"/>
    <property type="nucleotide sequence ID" value="NM_001179510.1"/>
</dbReference>
<dbReference type="PDB" id="4EQV">
    <property type="method" value="X-ray"/>
    <property type="resolution" value="3.40 A"/>
    <property type="chains" value="A/B/C/D/E/F/G/H=21-532"/>
</dbReference>
<dbReference type="PDBsum" id="4EQV"/>
<dbReference type="SMR" id="P00724"/>
<dbReference type="BioGRID" id="34830">
    <property type="interactions" value="92"/>
</dbReference>
<dbReference type="DIP" id="DIP-5542N"/>
<dbReference type="FunCoup" id="P00724">
    <property type="interactions" value="624"/>
</dbReference>
<dbReference type="IntAct" id="P00724">
    <property type="interactions" value="2"/>
</dbReference>
<dbReference type="MINT" id="P00724"/>
<dbReference type="STRING" id="4932.YIL162W"/>
<dbReference type="CAZy" id="GH32">
    <property type="family name" value="Glycoside Hydrolase Family 32"/>
</dbReference>
<dbReference type="GlyConnect" id="303">
    <property type="glycosylation" value="10 N-Linked glycans"/>
</dbReference>
<dbReference type="GlyCosmos" id="P00724">
    <property type="glycosylation" value="13 sites, 12 glycans"/>
</dbReference>
<dbReference type="GlyGen" id="P00724">
    <property type="glycosylation" value="14 sites, 12 N-linked glycans (1 site)"/>
</dbReference>
<dbReference type="iPTMnet" id="P00724"/>
<dbReference type="PaxDb" id="4932-YIL162W"/>
<dbReference type="PeptideAtlas" id="P00724"/>
<dbReference type="EnsemblFungi" id="YIL162W_mRNA">
    <molecule id="P00724-1"/>
    <property type="protein sequence ID" value="YIL162W"/>
    <property type="gene ID" value="YIL162W"/>
</dbReference>
<dbReference type="GeneID" id="854644"/>
<dbReference type="KEGG" id="sce:YIL162W"/>
<dbReference type="AGR" id="SGD:S000001424"/>
<dbReference type="SGD" id="S000001424">
    <property type="gene designation" value="SUC2"/>
</dbReference>
<dbReference type="VEuPathDB" id="FungiDB:YIL162W"/>
<dbReference type="eggNOG" id="KOG0228">
    <property type="taxonomic scope" value="Eukaryota"/>
</dbReference>
<dbReference type="HOGENOM" id="CLU_001528_3_3_1"/>
<dbReference type="InParanoid" id="P00724"/>
<dbReference type="OMA" id="GTEWRHA"/>
<dbReference type="OrthoDB" id="202537at2759"/>
<dbReference type="BioCyc" id="YEAST:YIL162W-MONOMER"/>
<dbReference type="BRENDA" id="3.2.1.26">
    <property type="organism ID" value="984"/>
</dbReference>
<dbReference type="BioGRID-ORCS" id="854644">
    <property type="hits" value="3 hits in 10 CRISPR screens"/>
</dbReference>
<dbReference type="EvolutionaryTrace" id="P00724"/>
<dbReference type="PRO" id="PR:P00724"/>
<dbReference type="Proteomes" id="UP000002311">
    <property type="component" value="Chromosome IX"/>
</dbReference>
<dbReference type="RNAct" id="P00724">
    <property type="molecule type" value="protein"/>
</dbReference>
<dbReference type="GO" id="GO:0071944">
    <property type="term" value="C:cell periphery"/>
    <property type="evidence" value="ECO:0007005"/>
    <property type="project" value="SGD"/>
</dbReference>
<dbReference type="GO" id="GO:0005737">
    <property type="term" value="C:cytoplasm"/>
    <property type="evidence" value="ECO:0000314"/>
    <property type="project" value="SGD"/>
</dbReference>
<dbReference type="GO" id="GO:0005576">
    <property type="term" value="C:extracellular region"/>
    <property type="evidence" value="ECO:0000314"/>
    <property type="project" value="SGD"/>
</dbReference>
<dbReference type="GO" id="GO:0000324">
    <property type="term" value="C:fungal-type vacuole"/>
    <property type="evidence" value="ECO:0007005"/>
    <property type="project" value="SGD"/>
</dbReference>
<dbReference type="GO" id="GO:0005739">
    <property type="term" value="C:mitochondrion"/>
    <property type="evidence" value="ECO:0007005"/>
    <property type="project" value="SGD"/>
</dbReference>
<dbReference type="GO" id="GO:0004564">
    <property type="term" value="F:beta-fructofuranosidase activity"/>
    <property type="evidence" value="ECO:0000314"/>
    <property type="project" value="SGD"/>
</dbReference>
<dbReference type="GO" id="GO:0051670">
    <property type="term" value="F:inulinase activity"/>
    <property type="evidence" value="ECO:0000314"/>
    <property type="project" value="SGD"/>
</dbReference>
<dbReference type="GO" id="GO:0004575">
    <property type="term" value="F:sucrose alpha-glucosidase activity"/>
    <property type="evidence" value="ECO:0000318"/>
    <property type="project" value="GO_Central"/>
</dbReference>
<dbReference type="GO" id="GO:0010147">
    <property type="term" value="P:fructan catabolic process"/>
    <property type="evidence" value="ECO:0000315"/>
    <property type="project" value="SGD"/>
</dbReference>
<dbReference type="GO" id="GO:1902927">
    <property type="term" value="P:inulin catabolic process"/>
    <property type="evidence" value="ECO:0000314"/>
    <property type="project" value="SGD"/>
</dbReference>
<dbReference type="GO" id="GO:0034484">
    <property type="term" value="P:raffinose catabolic process"/>
    <property type="evidence" value="ECO:0000315"/>
    <property type="project" value="SGD"/>
</dbReference>
<dbReference type="GO" id="GO:0005987">
    <property type="term" value="P:sucrose catabolic process"/>
    <property type="evidence" value="ECO:0000314"/>
    <property type="project" value="SGD"/>
</dbReference>
<dbReference type="CDD" id="cd18622">
    <property type="entry name" value="GH32_Inu-like"/>
    <property type="match status" value="1"/>
</dbReference>
<dbReference type="FunFam" id="2.115.10.20:FF:000002">
    <property type="entry name" value="Invertase 2"/>
    <property type="match status" value="1"/>
</dbReference>
<dbReference type="FunFam" id="2.60.120.560:FF:000004">
    <property type="entry name" value="Invertase 2"/>
    <property type="match status" value="1"/>
</dbReference>
<dbReference type="Gene3D" id="2.60.120.560">
    <property type="entry name" value="Exo-inulinase, domain 1"/>
    <property type="match status" value="1"/>
</dbReference>
<dbReference type="Gene3D" id="2.115.10.20">
    <property type="entry name" value="Glycosyl hydrolase domain, family 43"/>
    <property type="match status" value="1"/>
</dbReference>
<dbReference type="InterPro" id="IPR013320">
    <property type="entry name" value="ConA-like_dom_sf"/>
</dbReference>
<dbReference type="InterPro" id="IPR001362">
    <property type="entry name" value="Glyco_hydro_32"/>
</dbReference>
<dbReference type="InterPro" id="IPR018053">
    <property type="entry name" value="Glyco_hydro_32_AS"/>
</dbReference>
<dbReference type="InterPro" id="IPR013189">
    <property type="entry name" value="Glyco_hydro_32_C"/>
</dbReference>
<dbReference type="InterPro" id="IPR013148">
    <property type="entry name" value="Glyco_hydro_32_N"/>
</dbReference>
<dbReference type="InterPro" id="IPR023296">
    <property type="entry name" value="Glyco_hydro_beta-prop_sf"/>
</dbReference>
<dbReference type="PANTHER" id="PTHR42800">
    <property type="entry name" value="EXOINULINASE INUD (AFU_ORTHOLOGUE AFUA_5G00480)"/>
    <property type="match status" value="1"/>
</dbReference>
<dbReference type="PANTHER" id="PTHR42800:SF4">
    <property type="entry name" value="INVERTASE 2"/>
    <property type="match status" value="1"/>
</dbReference>
<dbReference type="Pfam" id="PF08244">
    <property type="entry name" value="Glyco_hydro_32C"/>
    <property type="match status" value="1"/>
</dbReference>
<dbReference type="Pfam" id="PF00251">
    <property type="entry name" value="Glyco_hydro_32N"/>
    <property type="match status" value="1"/>
</dbReference>
<dbReference type="SMART" id="SM00640">
    <property type="entry name" value="Glyco_32"/>
    <property type="match status" value="1"/>
</dbReference>
<dbReference type="SUPFAM" id="SSF75005">
    <property type="entry name" value="Arabinanase/levansucrase/invertase"/>
    <property type="match status" value="1"/>
</dbReference>
<dbReference type="SUPFAM" id="SSF49899">
    <property type="entry name" value="Concanavalin A-like lectins/glucanases"/>
    <property type="match status" value="1"/>
</dbReference>
<dbReference type="PROSITE" id="PS00609">
    <property type="entry name" value="GLYCOSYL_HYDROL_F32"/>
    <property type="match status" value="1"/>
</dbReference>
<name>INV2_YEAST</name>
<accession>P00724</accession>
<accession>D6VVC4</accession>
<accession>Q12671</accession>
<reference key="1">
    <citation type="journal article" date="1983" name="Nucleic Acids Res.">
        <title>Nucleotide sequence of the yeast SUC2 gene for invertase.</title>
        <authorList>
            <person name="Taussig R."/>
            <person name="Carlson M."/>
        </authorList>
    </citation>
    <scope>NUCLEOTIDE SEQUENCE [GENOMIC DNA]</scope>
</reference>
<reference key="2">
    <citation type="journal article" date="1997" name="Nature">
        <title>The nucleotide sequence of Saccharomyces cerevisiae chromosome IX.</title>
        <authorList>
            <person name="Churcher C.M."/>
            <person name="Bowman S."/>
            <person name="Badcock K."/>
            <person name="Bankier A.T."/>
            <person name="Brown D."/>
            <person name="Chillingworth T."/>
            <person name="Connor R."/>
            <person name="Devlin K."/>
            <person name="Gentles S."/>
            <person name="Hamlin N."/>
            <person name="Harris D.E."/>
            <person name="Horsnell T."/>
            <person name="Hunt S."/>
            <person name="Jagels K."/>
            <person name="Jones M."/>
            <person name="Lye G."/>
            <person name="Moule S."/>
            <person name="Odell C."/>
            <person name="Pearson D."/>
            <person name="Rajandream M.A."/>
            <person name="Rice P."/>
            <person name="Rowley N."/>
            <person name="Skelton J."/>
            <person name="Smith V."/>
            <person name="Walsh S.V."/>
            <person name="Whitehead S."/>
            <person name="Barrell B.G."/>
        </authorList>
    </citation>
    <scope>NUCLEOTIDE SEQUENCE [LARGE SCALE GENOMIC DNA]</scope>
    <source>
        <strain>ATCC 204508 / S288c</strain>
    </source>
</reference>
<reference key="3">
    <citation type="journal article" date="2014" name="G3 (Bethesda)">
        <title>The reference genome sequence of Saccharomyces cerevisiae: Then and now.</title>
        <authorList>
            <person name="Engel S.R."/>
            <person name="Dietrich F.S."/>
            <person name="Fisk D.G."/>
            <person name="Binkley G."/>
            <person name="Balakrishnan R."/>
            <person name="Costanzo M.C."/>
            <person name="Dwight S.S."/>
            <person name="Hitz B.C."/>
            <person name="Karra K."/>
            <person name="Nash R.S."/>
            <person name="Weng S."/>
            <person name="Wong E.D."/>
            <person name="Lloyd P."/>
            <person name="Skrzypek M.S."/>
            <person name="Miyasato S.R."/>
            <person name="Simison M."/>
            <person name="Cherry J.M."/>
        </authorList>
    </citation>
    <scope>GENOME REANNOTATION</scope>
    <source>
        <strain>ATCC 204508 / S288c</strain>
    </source>
</reference>
<reference key="4">
    <citation type="journal article" date="1991" name="Yi Chuan Xue Bao">
        <title>[The effects of upstream region of SUC2 gene on its expression].</title>
        <authorList>
            <person name="Xie K.W."/>
            <person name="Feng B."/>
            <person name="Li Y.Y."/>
        </authorList>
    </citation>
    <scope>NUCLEOTIDE SEQUENCE [GENOMIC DNA] OF 1-67</scope>
    <source>
        <strain>33</strain>
    </source>
</reference>
<reference key="5">
    <citation type="journal article" date="1983" name="Mol. Cell. Biol.">
        <title>The secreted form of invertase in Saccharomyces cerevisiae is synthesized from mRNA encoding a signal sequence.</title>
        <authorList>
            <person name="Carlson M."/>
            <person name="Taussig R."/>
            <person name="Kustu S."/>
            <person name="Botstein D."/>
        </authorList>
    </citation>
    <scope>NUCLEOTIDE SEQUENCE [GENOMIC DNA] OF 1-54</scope>
</reference>
<reference key="6">
    <citation type="journal article" date="1984" name="Mol. Cell. Biol.">
        <title>Upstream region required for regulated expression of the glucose-repressible SUC2 gene of Saccharomyces cerevisiae.</title>
        <authorList>
            <person name="Sarokin L."/>
            <person name="Carlson M."/>
        </authorList>
    </citation>
    <scope>NUCLEOTIDE SEQUENCE [GENOMIC DNA] OF 1-30</scope>
</reference>
<reference key="7">
    <citation type="journal article" date="1986" name="Mol. Cell. Biol.">
        <title>Secretion-defective mutations in the signal sequence for Saccharomyces cerevisiae invertase.</title>
        <authorList>
            <person name="Kaiser C.A."/>
            <person name="Botstein D."/>
        </authorList>
    </citation>
    <scope>NUCLEOTIDE SEQUENCE [GENOMIC DNA] OF 1-21</scope>
</reference>
<reference key="8">
    <citation type="journal article" date="1990" name="J. Biol. Chem.">
        <title>Identification of an active-site residue in yeast invertase by affinity labeling and site-directed mutagenesis.</title>
        <authorList>
            <person name="Reddy V.A."/>
            <person name="Maley F."/>
        </authorList>
    </citation>
    <scope>PROTEIN SEQUENCE OF 20-27 AND 38-45</scope>
    <scope>ACTIVE SITE</scope>
    <scope>MUTAGENESIS OF ASP-42</scope>
</reference>
<reference key="9">
    <citation type="journal article" date="1988" name="J. Biol. Chem.">
        <title>Characterization of the glycosylation sites in yeast external invertase. I. N-linked oligosaccharide content of the individual sequons.</title>
        <authorList>
            <person name="Reddy V.A."/>
            <person name="Johnson R.S."/>
            <person name="Biemann K."/>
            <person name="Williams R.S."/>
            <person name="Ziegler F.D."/>
            <person name="Trimble R.B."/>
            <person name="Maley F."/>
        </authorList>
    </citation>
    <scope>PROTEIN SEQUENCE OF 21-532</scope>
    <scope>GLYCOSYLATION AT ASN-23; ASN-64; ASN-97; ASN-111; ASN-118; ASN-165; ASN-266; ASN-275; ASN-356; ASN-369; ASN-384; ASN-398 AND ASN-512</scope>
</reference>
<reference key="10">
    <citation type="journal article" date="1982" name="Cell">
        <title>Two differentially regulated mRNAs with different 5' ends encode secreted with intracellular forms of yeast invertase.</title>
        <authorList>
            <person name="Carlson M."/>
            <person name="Botstein D."/>
        </authorList>
    </citation>
    <scope>IDENTIFICATION OF ISOFORMS</scope>
    <scope>SUBCELLULAR LOCATION</scope>
</reference>
<reference key="11">
    <citation type="journal article" date="2003" name="Nature">
        <title>Global analysis of protein expression in yeast.</title>
        <authorList>
            <person name="Ghaemmaghami S."/>
            <person name="Huh W.-K."/>
            <person name="Bower K."/>
            <person name="Howson R.W."/>
            <person name="Belle A."/>
            <person name="Dephoure N."/>
            <person name="O'Shea E.K."/>
            <person name="Weissman J.S."/>
        </authorList>
    </citation>
    <scope>LEVEL OF PROTEIN EXPRESSION [LARGE SCALE ANALYSIS]</scope>
</reference>
<gene>
    <name type="primary">SUC2</name>
    <name type="ordered locus">YIL162W</name>
</gene>
<evidence type="ECO:0000250" key="1"/>
<evidence type="ECO:0000255" key="2">
    <source>
        <dbReference type="PROSITE-ProRule" id="PRU10067"/>
    </source>
</evidence>
<evidence type="ECO:0000269" key="3">
    <source>
    </source>
</evidence>
<evidence type="ECO:0000269" key="4">
    <source>
    </source>
</evidence>
<evidence type="ECO:0000269" key="5">
    <source>
    </source>
</evidence>
<evidence type="ECO:0000305" key="6"/>
<evidence type="ECO:0007829" key="7">
    <source>
        <dbReference type="PDB" id="4EQV"/>
    </source>
</evidence>